<sequence>MQELTPMMQQYMEIKQRVKDCILFFRLGDFYEMFFDDAIIASKELEIALTARDCGNNEKAPMCGVPYHSAHSYIAKLIEKGYKVAICEQVEDPKLAKGVVKREITRIITPGTFIDENFSKANNFICCVARVESDFALTFVDISTGEMYACLIENDIQKMINEISKYAPSEILISHLDNELYEVIRENYNSFVQRIEFIEIDRCYDLIDKQMQITNINDKVALSVGNLLNYLVDTQKISFNYIKKFEFYRVQNYLQIDLSTKRNLELTESIIARSKKNSLFGILDQAKTSMGSRLIKKWLERPLIDVVEINRRLDAVEELYNNFPLLMQIEGLLEGIYDIERLSSKFAYKSINAKDLLSLKKSIEVLPRLKELLGEFKSPLLKELYNELDTLEDVYSLIDSSINEDAPVGLKEGGIIKDGFNDHVDRLRNISKNSKELLIQYEEKERNLTGIKNLKIGYNKVFGYYIEVTKSNYSLVPERYIRKQTLANAERYVTEELKKLEDEIINAEQKLVELEYELFCQIRDKIESQIERIQKTASCIAIIDALCSFAHIAIDNRYTKPIVYLGDRIYIKNGRHPVVEKMIGYSNFVPNDTELDNDQNRVLIITGPNMAGKSTYMRQVALIVIMAQMGCFVPAEEAQIGIVDKIFSRIGASDDISSGQSTFMVEMSEVANILKNATPKSLIIFDEVGRGTSTYDGLSIAWAVLEFVADKSKIGAKTLFATHYHELTELEEKISGVKNYRVDVKEEGKNIIFLRKIVRGGCDSSYGIHVARLAGIPEEVLQRAEQILKKLEEADINRKEAKRLRKEIKREFTEQIEFFSYKKDEIIEKIENLDILNITPIQALNILSELKHEIIKAKERQLL</sequence>
<evidence type="ECO:0000255" key="1">
    <source>
        <dbReference type="HAMAP-Rule" id="MF_00096"/>
    </source>
</evidence>
<reference key="1">
    <citation type="submission" date="2007-04" db="EMBL/GenBank/DDBJ databases">
        <title>Genome sequence of the thermophilic hydrogen-producing bacterium Caldicellulosiruptor saccharolyticus DSM 8903.</title>
        <authorList>
            <person name="Copeland A."/>
            <person name="Lucas S."/>
            <person name="Lapidus A."/>
            <person name="Barry K."/>
            <person name="Detter J.C."/>
            <person name="Glavina del Rio T."/>
            <person name="Hammon N."/>
            <person name="Israni S."/>
            <person name="Dalin E."/>
            <person name="Tice H."/>
            <person name="Pitluck S."/>
            <person name="Kiss H."/>
            <person name="Brettin T."/>
            <person name="Bruce D."/>
            <person name="Han C."/>
            <person name="Schmutz J."/>
            <person name="Larimer F."/>
            <person name="Land M."/>
            <person name="Hauser L."/>
            <person name="Kyrpides N."/>
            <person name="Lykidis A."/>
            <person name="van de Werken H.J.G."/>
            <person name="Verhaart M.R.A."/>
            <person name="VanFossen A.L."/>
            <person name="Lewis D.L."/>
            <person name="Nichols J.D."/>
            <person name="Goorissen H.P."/>
            <person name="van Niel E.W.J."/>
            <person name="Stams F.J.M."/>
            <person name="Willquist K.U."/>
            <person name="Ward D.E."/>
            <person name="van der Oost J."/>
            <person name="Kelly R.M."/>
            <person name="Kengen S.M.W."/>
            <person name="Richardson P."/>
        </authorList>
    </citation>
    <scope>NUCLEOTIDE SEQUENCE [LARGE SCALE GENOMIC DNA]</scope>
    <source>
        <strain>ATCC 43494 / DSM 8903 / Tp8T 6331</strain>
    </source>
</reference>
<accession>A4XL47</accession>
<protein>
    <recommendedName>
        <fullName evidence="1">DNA mismatch repair protein MutS</fullName>
    </recommendedName>
</protein>
<dbReference type="EMBL" id="CP000679">
    <property type="protein sequence ID" value="ABP67632.1"/>
    <property type="molecule type" value="Genomic_DNA"/>
</dbReference>
<dbReference type="RefSeq" id="WP_011917567.1">
    <property type="nucleotide sequence ID" value="NC_009437.1"/>
</dbReference>
<dbReference type="SMR" id="A4XL47"/>
<dbReference type="STRING" id="351627.Csac_2047"/>
<dbReference type="KEGG" id="csc:Csac_2047"/>
<dbReference type="eggNOG" id="COG0249">
    <property type="taxonomic scope" value="Bacteria"/>
</dbReference>
<dbReference type="HOGENOM" id="CLU_002472_4_0_9"/>
<dbReference type="OrthoDB" id="9802448at2"/>
<dbReference type="Proteomes" id="UP000000256">
    <property type="component" value="Chromosome"/>
</dbReference>
<dbReference type="GO" id="GO:0005829">
    <property type="term" value="C:cytosol"/>
    <property type="evidence" value="ECO:0007669"/>
    <property type="project" value="TreeGrafter"/>
</dbReference>
<dbReference type="GO" id="GO:0005524">
    <property type="term" value="F:ATP binding"/>
    <property type="evidence" value="ECO:0007669"/>
    <property type="project" value="UniProtKB-UniRule"/>
</dbReference>
<dbReference type="GO" id="GO:0140664">
    <property type="term" value="F:ATP-dependent DNA damage sensor activity"/>
    <property type="evidence" value="ECO:0007669"/>
    <property type="project" value="InterPro"/>
</dbReference>
<dbReference type="GO" id="GO:0003684">
    <property type="term" value="F:damaged DNA binding"/>
    <property type="evidence" value="ECO:0007669"/>
    <property type="project" value="UniProtKB-UniRule"/>
</dbReference>
<dbReference type="GO" id="GO:0030983">
    <property type="term" value="F:mismatched DNA binding"/>
    <property type="evidence" value="ECO:0007669"/>
    <property type="project" value="InterPro"/>
</dbReference>
<dbReference type="GO" id="GO:0006298">
    <property type="term" value="P:mismatch repair"/>
    <property type="evidence" value="ECO:0007669"/>
    <property type="project" value="UniProtKB-UniRule"/>
</dbReference>
<dbReference type="CDD" id="cd03284">
    <property type="entry name" value="ABC_MutS1"/>
    <property type="match status" value="1"/>
</dbReference>
<dbReference type="FunFam" id="1.10.1420.10:FF:000007">
    <property type="entry name" value="DNA mismatch repair protein MutS"/>
    <property type="match status" value="1"/>
</dbReference>
<dbReference type="FunFam" id="3.40.1170.10:FF:000001">
    <property type="entry name" value="DNA mismatch repair protein MutS"/>
    <property type="match status" value="1"/>
</dbReference>
<dbReference type="FunFam" id="3.40.50.300:FF:001579">
    <property type="entry name" value="DNA mismatch repair protein MutS"/>
    <property type="match status" value="1"/>
</dbReference>
<dbReference type="Gene3D" id="1.10.1420.10">
    <property type="match status" value="2"/>
</dbReference>
<dbReference type="Gene3D" id="3.40.1170.10">
    <property type="entry name" value="DNA repair protein MutS, domain I"/>
    <property type="match status" value="1"/>
</dbReference>
<dbReference type="Gene3D" id="3.30.420.110">
    <property type="entry name" value="MutS, connector domain"/>
    <property type="match status" value="1"/>
</dbReference>
<dbReference type="Gene3D" id="3.40.50.300">
    <property type="entry name" value="P-loop containing nucleotide triphosphate hydrolases"/>
    <property type="match status" value="1"/>
</dbReference>
<dbReference type="HAMAP" id="MF_00096">
    <property type="entry name" value="MutS"/>
    <property type="match status" value="1"/>
</dbReference>
<dbReference type="InterPro" id="IPR005748">
    <property type="entry name" value="DNA_mismatch_repair_MutS"/>
</dbReference>
<dbReference type="InterPro" id="IPR007695">
    <property type="entry name" value="DNA_mismatch_repair_MutS-lik_N"/>
</dbReference>
<dbReference type="InterPro" id="IPR017261">
    <property type="entry name" value="DNA_mismatch_repair_MutS/MSH"/>
</dbReference>
<dbReference type="InterPro" id="IPR000432">
    <property type="entry name" value="DNA_mismatch_repair_MutS_C"/>
</dbReference>
<dbReference type="InterPro" id="IPR007861">
    <property type="entry name" value="DNA_mismatch_repair_MutS_clamp"/>
</dbReference>
<dbReference type="InterPro" id="IPR007696">
    <property type="entry name" value="DNA_mismatch_repair_MutS_core"/>
</dbReference>
<dbReference type="InterPro" id="IPR016151">
    <property type="entry name" value="DNA_mismatch_repair_MutS_N"/>
</dbReference>
<dbReference type="InterPro" id="IPR036187">
    <property type="entry name" value="DNA_mismatch_repair_MutS_sf"/>
</dbReference>
<dbReference type="InterPro" id="IPR007860">
    <property type="entry name" value="DNA_mmatch_repair_MutS_con_dom"/>
</dbReference>
<dbReference type="InterPro" id="IPR045076">
    <property type="entry name" value="MutS"/>
</dbReference>
<dbReference type="InterPro" id="IPR036678">
    <property type="entry name" value="MutS_con_dom_sf"/>
</dbReference>
<dbReference type="InterPro" id="IPR027417">
    <property type="entry name" value="P-loop_NTPase"/>
</dbReference>
<dbReference type="NCBIfam" id="TIGR01070">
    <property type="entry name" value="mutS1"/>
    <property type="match status" value="1"/>
</dbReference>
<dbReference type="NCBIfam" id="NF003810">
    <property type="entry name" value="PRK05399.1"/>
    <property type="match status" value="1"/>
</dbReference>
<dbReference type="PANTHER" id="PTHR11361:SF34">
    <property type="entry name" value="DNA MISMATCH REPAIR PROTEIN MSH1, MITOCHONDRIAL"/>
    <property type="match status" value="1"/>
</dbReference>
<dbReference type="PANTHER" id="PTHR11361">
    <property type="entry name" value="DNA MISMATCH REPAIR PROTEIN MUTS FAMILY MEMBER"/>
    <property type="match status" value="1"/>
</dbReference>
<dbReference type="Pfam" id="PF01624">
    <property type="entry name" value="MutS_I"/>
    <property type="match status" value="1"/>
</dbReference>
<dbReference type="Pfam" id="PF05188">
    <property type="entry name" value="MutS_II"/>
    <property type="match status" value="1"/>
</dbReference>
<dbReference type="Pfam" id="PF05192">
    <property type="entry name" value="MutS_III"/>
    <property type="match status" value="1"/>
</dbReference>
<dbReference type="Pfam" id="PF05190">
    <property type="entry name" value="MutS_IV"/>
    <property type="match status" value="1"/>
</dbReference>
<dbReference type="Pfam" id="PF00488">
    <property type="entry name" value="MutS_V"/>
    <property type="match status" value="1"/>
</dbReference>
<dbReference type="PIRSF" id="PIRSF037677">
    <property type="entry name" value="DNA_mis_repair_Msh6"/>
    <property type="match status" value="1"/>
</dbReference>
<dbReference type="SMART" id="SM00534">
    <property type="entry name" value="MUTSac"/>
    <property type="match status" value="1"/>
</dbReference>
<dbReference type="SMART" id="SM00533">
    <property type="entry name" value="MUTSd"/>
    <property type="match status" value="1"/>
</dbReference>
<dbReference type="SUPFAM" id="SSF55271">
    <property type="entry name" value="DNA repair protein MutS, domain I"/>
    <property type="match status" value="1"/>
</dbReference>
<dbReference type="SUPFAM" id="SSF53150">
    <property type="entry name" value="DNA repair protein MutS, domain II"/>
    <property type="match status" value="1"/>
</dbReference>
<dbReference type="SUPFAM" id="SSF48334">
    <property type="entry name" value="DNA repair protein MutS, domain III"/>
    <property type="match status" value="1"/>
</dbReference>
<dbReference type="SUPFAM" id="SSF52540">
    <property type="entry name" value="P-loop containing nucleoside triphosphate hydrolases"/>
    <property type="match status" value="1"/>
</dbReference>
<dbReference type="PROSITE" id="PS00486">
    <property type="entry name" value="DNA_MISMATCH_REPAIR_2"/>
    <property type="match status" value="1"/>
</dbReference>
<feature type="chain" id="PRO_1000071272" description="DNA mismatch repair protein MutS">
    <location>
        <begin position="1"/>
        <end position="863"/>
    </location>
</feature>
<feature type="binding site" evidence="1">
    <location>
        <begin position="607"/>
        <end position="614"/>
    </location>
    <ligand>
        <name>ATP</name>
        <dbReference type="ChEBI" id="CHEBI:30616"/>
    </ligand>
</feature>
<proteinExistence type="inferred from homology"/>
<comment type="function">
    <text evidence="1">This protein is involved in the repair of mismatches in DNA. It is possible that it carries out the mismatch recognition step. This protein has a weak ATPase activity.</text>
</comment>
<comment type="similarity">
    <text evidence="1">Belongs to the DNA mismatch repair MutS family.</text>
</comment>
<name>MUTS_CALS8</name>
<keyword id="KW-0067">ATP-binding</keyword>
<keyword id="KW-0227">DNA damage</keyword>
<keyword id="KW-0234">DNA repair</keyword>
<keyword id="KW-0238">DNA-binding</keyword>
<keyword id="KW-0547">Nucleotide-binding</keyword>
<gene>
    <name evidence="1" type="primary">mutS</name>
    <name type="ordered locus">Csac_2047</name>
</gene>
<organism>
    <name type="scientific">Caldicellulosiruptor saccharolyticus (strain ATCC 43494 / DSM 8903 / Tp8T 6331)</name>
    <dbReference type="NCBI Taxonomy" id="351627"/>
    <lineage>
        <taxon>Bacteria</taxon>
        <taxon>Bacillati</taxon>
        <taxon>Bacillota</taxon>
        <taxon>Bacillota incertae sedis</taxon>
        <taxon>Caldicellulosiruptorales</taxon>
        <taxon>Caldicellulosiruptoraceae</taxon>
        <taxon>Caldicellulosiruptor</taxon>
    </lineage>
</organism>